<sequence length="622" mass="70101">MSTYAAYTTSTYQGRGLASGTYASGFGQLVSGMSSAGAICTTQIRDAREREKREIGLLNDRLADYIEKVRFLEAQNRCLSHDIDILRNGFSGGGHVSGLFDAEINQAKHILEQTTAHRSTFERDITGLSAEIEVFRKKWLDAVNAVKAHREDHDVDLDRLAKIEAEISLFKRKIRIVEEDVIRIRRENDGIYNEIARIKQLTHNEIALKNERSLNVSDLLQRINLLQTENNVRIEQELVFIRRDTTADNRDYFRHELQAAIRDIRADYEAISIRNRQDIEVWYREQIRKIQDESVRVNPDLYKEELISIRTTVTNVRSRLAEVEGRNFFLERLIDDLKNNEEAKFFEISLAERDAQIATLRDQCTELSIQMEKLCDNEISLRAEIERYRILLNGANVTTYTSNTHGSGSGIAVGGVVGGSTRVISQTTRTHSSSNTSYSNVPASRGGYSISGNVGGISVGGTIGSHGASAHATGGIIGSGVQAHRGSVSSLITDKPRDRVHDEKGVDQSGRHFHSWYLGTISINQVTPSYIELKNICKIRRVDVGGFRIEQSVNGQVLGSAQINVPLILDPQEVVRFNHRHGKYLGQFFMDVDAFDNSTVARTSMYNYTEPHEERAWFVYLD</sequence>
<accession>Q21067</accession>
<accession>O02366</accession>
<accession>Q21579</accession>
<accession>Q21580</accession>
<evidence type="ECO:0000255" key="1">
    <source>
        <dbReference type="PROSITE-ProRule" id="PRU01187"/>
    </source>
</evidence>
<evidence type="ECO:0000255" key="2">
    <source>
        <dbReference type="PROSITE-ProRule" id="PRU01188"/>
    </source>
</evidence>
<evidence type="ECO:0000269" key="3">
    <source>
    </source>
</evidence>
<evidence type="ECO:0000269" key="4">
    <source>
    </source>
</evidence>
<evidence type="ECO:0000305" key="5"/>
<organism>
    <name type="scientific">Caenorhabditis elegans</name>
    <dbReference type="NCBI Taxonomy" id="6239"/>
    <lineage>
        <taxon>Eukaryota</taxon>
        <taxon>Metazoa</taxon>
        <taxon>Ecdysozoa</taxon>
        <taxon>Nematoda</taxon>
        <taxon>Chromadorea</taxon>
        <taxon>Rhabditida</taxon>
        <taxon>Rhabditina</taxon>
        <taxon>Rhabditomorpha</taxon>
        <taxon>Rhabditoidea</taxon>
        <taxon>Rhabditidae</taxon>
        <taxon>Peloderinae</taxon>
        <taxon>Caenorhabditis</taxon>
    </lineage>
</organism>
<feature type="chain" id="PRO_0000063842" description="Intermediate filament protein ifc-2">
    <location>
        <begin position="1"/>
        <end position="622"/>
    </location>
</feature>
<feature type="domain" description="IF rod" evidence="2">
    <location>
        <begin position="51"/>
        <end position="399"/>
    </location>
</feature>
<feature type="domain" description="LTD" evidence="1">
    <location>
        <begin position="509"/>
        <end position="622"/>
    </location>
</feature>
<feature type="region of interest" description="Head">
    <location>
        <begin position="19"/>
        <end position="54"/>
    </location>
</feature>
<feature type="region of interest" description="Coil 1A">
    <location>
        <begin position="55"/>
        <end position="86"/>
    </location>
</feature>
<feature type="region of interest" description="Linker 1">
    <location>
        <begin position="87"/>
        <end position="99"/>
    </location>
</feature>
<feature type="region of interest" description="Coil 1B">
    <location>
        <begin position="100"/>
        <end position="237"/>
    </location>
</feature>
<feature type="region of interest" description="Linker 12">
    <location>
        <begin position="238"/>
        <end position="255"/>
    </location>
</feature>
<feature type="region of interest" description="Coil 2">
    <location>
        <begin position="256"/>
        <end position="399"/>
    </location>
</feature>
<feature type="region of interest" description="Tail">
    <location>
        <begin position="400"/>
        <end position="550"/>
    </location>
</feature>
<feature type="splice variant" id="VSP_010149" description="In isoform b." evidence="5">
    <original>VSSLITDKPRDRVHD</original>
    <variation>GTYQQSHHSYSSSNH</variation>
    <location>
        <begin position="488"/>
        <end position="502"/>
    </location>
</feature>
<feature type="splice variant" id="VSP_010150" description="In isoform b." evidence="5">
    <location>
        <begin position="503"/>
        <end position="622"/>
    </location>
</feature>
<name>IFC2_CAEEL</name>
<reference key="1">
    <citation type="journal article" date="1994" name="EMBO J.">
        <title>Eight genes and alternative RNA processing pathways generate an unexpectedly large diversity of cytoplasmic intermediate filament proteins in the nematode Caenorhabditis elegans.</title>
        <authorList>
            <person name="Dodemont H."/>
            <person name="Riemer D."/>
            <person name="Ledger T.N."/>
            <person name="Weber K."/>
        </authorList>
    </citation>
    <scope>NUCLEOTIDE SEQUENCE [GENOMIC DNA]</scope>
    <scope>ALTERNATIVE SPLICING (ISOFORMS A AND B)</scope>
    <source>
        <strain>Bristol N2</strain>
    </source>
</reference>
<reference key="2">
    <citation type="journal article" date="1998" name="Science">
        <title>Genome sequence of the nematode C. elegans: a platform for investigating biology.</title>
        <authorList>
            <consortium name="The C. elegans sequencing consortium"/>
        </authorList>
    </citation>
    <scope>NUCLEOTIDE SEQUENCE [LARGE SCALE GENOMIC DNA]</scope>
    <scope>ALTERNATIVE SPLICING</scope>
    <source>
        <strain>Bristol N2</strain>
    </source>
</reference>
<reference key="3">
    <citation type="journal article" date="2001" name="Proc. Natl. Acad. Sci. U.S.A.">
        <title>Essential roles for four cytoplasmic intermediate filament proteins in Caenorhabditis elegans development.</title>
        <authorList>
            <person name="Karabinos A."/>
            <person name="Schmidt H."/>
            <person name="Harborth J."/>
            <person name="Schnabel R."/>
            <person name="Weber K."/>
        </authorList>
    </citation>
    <scope>FUNCTION</scope>
    <scope>DISRUPTION PHENOTYPE</scope>
</reference>
<reference key="4">
    <citation type="journal article" date="2002" name="Mech. Dev.">
        <title>Expression profiles of the essential intermediate filament (IF) protein A2 and the IF protein C2 in the nematode Caenorhabditis elegans.</title>
        <authorList>
            <person name="Karabinos A."/>
            <person name="Schulze E."/>
            <person name="Klisch T."/>
            <person name="Wang J."/>
            <person name="Weber K."/>
        </authorList>
    </citation>
    <scope>SUBCELLULAR LOCATION</scope>
    <scope>TISSUE SPECIFICITY</scope>
    <scope>DEVELOPMENTAL STAGE</scope>
</reference>
<comment type="function">
    <text evidence="3">Cytoplasmic intermediate filaments provide mechanical strength to cells. Not essential protein, although its absence leads to mild defects in locomotion.</text>
</comment>
<comment type="subcellular location">
    <subcellularLocation>
        <location evidence="4">Cytoplasm</location>
    </subcellularLocation>
</comment>
<comment type="alternative products">
    <event type="alternative splicing"/>
    <isoform>
        <id>Q21067-1</id>
        <name>a</name>
        <sequence type="displayed"/>
    </isoform>
    <isoform>
        <id>Q21067-2</id>
        <name>b</name>
        <sequence type="described" ref="VSP_010149 VSP_010150"/>
    </isoform>
</comment>
<comment type="tissue specificity">
    <text evidence="4">Expressed in intestinal cells and at desmosomes in intestine and pharynx of the larva.</text>
</comment>
<comment type="developmental stage">
    <text evidence="4">Expressed from late embryogenesis, and thereafter.</text>
</comment>
<comment type="disruption phenotype">
    <text evidence="3">Mutants exhibit mild dumpy phenotype and moderate defects in movement in adults.</text>
</comment>
<comment type="similarity">
    <text evidence="2">Belongs to the intermediate filament family.</text>
</comment>
<comment type="sequence caution" evidence="5">
    <conflict type="erroneous gene model prediction">
        <sequence resource="EMBL-CDS" id="CAA50184"/>
    </conflict>
</comment>
<comment type="sequence caution" evidence="5">
    <conflict type="erroneous gene model prediction">
        <sequence resource="EMBL-CDS" id="CCD69439"/>
    </conflict>
</comment>
<comment type="sequence caution" evidence="5">
    <conflict type="erroneous gene model prediction">
        <sequence resource="EMBL-CDS" id="CCD69440"/>
    </conflict>
</comment>
<proteinExistence type="evidence at transcript level"/>
<gene>
    <name type="primary">ifc-2</name>
    <name type="ORF">M6.1</name>
</gene>
<keyword id="KW-0025">Alternative splicing</keyword>
<keyword id="KW-0175">Coiled coil</keyword>
<keyword id="KW-0963">Cytoplasm</keyword>
<keyword id="KW-0403">Intermediate filament</keyword>
<keyword id="KW-1185">Reference proteome</keyword>
<dbReference type="EMBL" id="X70836">
    <property type="protein sequence ID" value="CAA50184.1"/>
    <property type="status" value="ALT_SEQ"/>
    <property type="molecule type" value="Genomic_DNA"/>
</dbReference>
<dbReference type="EMBL" id="FO081140">
    <property type="protein sequence ID" value="CCD69439.1"/>
    <property type="status" value="ALT_SEQ"/>
    <property type="molecule type" value="Genomic_DNA"/>
</dbReference>
<dbReference type="EMBL" id="FO081140">
    <property type="protein sequence ID" value="CCD69440.1"/>
    <property type="status" value="ALT_SEQ"/>
    <property type="molecule type" value="Genomic_DNA"/>
</dbReference>
<dbReference type="RefSeq" id="NP_001256975.1">
    <molecule id="Q21067-1"/>
    <property type="nucleotide sequence ID" value="NM_001270046.2"/>
</dbReference>
<dbReference type="RefSeq" id="NP_001380259.1">
    <molecule id="Q21067-2"/>
    <property type="nucleotide sequence ID" value="NM_001392719.1"/>
</dbReference>
<dbReference type="RefSeq" id="NP_741705.1">
    <property type="nucleotide sequence ID" value="NM_171613.5"/>
</dbReference>
<dbReference type="RefSeq" id="NP_741706.1">
    <property type="nucleotide sequence ID" value="NM_171614.3"/>
</dbReference>
<dbReference type="SMR" id="Q21067"/>
<dbReference type="BioGRID" id="45367">
    <property type="interactions" value="11"/>
</dbReference>
<dbReference type="DIP" id="DIP-24946N"/>
<dbReference type="FunCoup" id="Q21067">
    <property type="interactions" value="6"/>
</dbReference>
<dbReference type="IntAct" id="Q21067">
    <property type="interactions" value="2"/>
</dbReference>
<dbReference type="MINT" id="Q21067"/>
<dbReference type="STRING" id="6239.M6.1b.1"/>
<dbReference type="PaxDb" id="6239-M6.1b"/>
<dbReference type="PeptideAtlas" id="Q21067"/>
<dbReference type="EnsemblMetazoa" id="M6.1a.1">
    <property type="protein sequence ID" value="M6.1a.1"/>
    <property type="gene ID" value="WBGene00002056"/>
</dbReference>
<dbReference type="EnsemblMetazoa" id="M6.1a.2">
    <property type="protein sequence ID" value="M6.1a.2"/>
    <property type="gene ID" value="WBGene00002056"/>
</dbReference>
<dbReference type="EnsemblMetazoa" id="M6.1b.1">
    <property type="protein sequence ID" value="M6.1b.1"/>
    <property type="gene ID" value="WBGene00002056"/>
</dbReference>
<dbReference type="GeneID" id="180414"/>
<dbReference type="KEGG" id="cel:CELE_M6.1"/>
<dbReference type="UCSC" id="M6.1b">
    <molecule id="Q21067-1"/>
    <property type="organism name" value="c. elegans"/>
</dbReference>
<dbReference type="AGR" id="WB:WBGene00002056"/>
<dbReference type="CTD" id="180414"/>
<dbReference type="WormBase" id="M6.1a">
    <property type="protein sequence ID" value="CE53626"/>
    <property type="gene ID" value="WBGene00002056"/>
    <property type="gene designation" value="ifc-2"/>
</dbReference>
<dbReference type="WormBase" id="M6.1b">
    <property type="protein sequence ID" value="CE53662"/>
    <property type="gene ID" value="WBGene00002056"/>
    <property type="gene designation" value="ifc-2"/>
</dbReference>
<dbReference type="eggNOG" id="KOG0977">
    <property type="taxonomic scope" value="Eukaryota"/>
</dbReference>
<dbReference type="GeneTree" id="ENSGT00970000196495"/>
<dbReference type="HOGENOM" id="CLU_030212_0_0_1"/>
<dbReference type="InParanoid" id="Q21067"/>
<dbReference type="OrthoDB" id="2441647at2759"/>
<dbReference type="PhylomeDB" id="Q21067"/>
<dbReference type="Reactome" id="R-CEL-2559584">
    <property type="pathway name" value="Formation of Senescence-Associated Heterochromatin Foci (SAHF)"/>
</dbReference>
<dbReference type="Reactome" id="R-CEL-4419969">
    <property type="pathway name" value="Depolymerization of the Nuclear Lamina"/>
</dbReference>
<dbReference type="Reactome" id="R-CEL-9013405">
    <property type="pathway name" value="RHOD GTPase cycle"/>
</dbReference>
<dbReference type="Reactome" id="R-CEL-9035034">
    <property type="pathway name" value="RHOF GTPase cycle"/>
</dbReference>
<dbReference type="SignaLink" id="Q21067"/>
<dbReference type="PRO" id="PR:Q21067"/>
<dbReference type="Proteomes" id="UP000001940">
    <property type="component" value="Chromosome X"/>
</dbReference>
<dbReference type="Bgee" id="WBGene00002056">
    <property type="expression patterns" value="Expressed in larva and 4 other cell types or tissues"/>
</dbReference>
<dbReference type="ExpressionAtlas" id="Q21067">
    <property type="expression patterns" value="baseline and differential"/>
</dbReference>
<dbReference type="GO" id="GO:0030054">
    <property type="term" value="C:cell junction"/>
    <property type="evidence" value="ECO:0000314"/>
    <property type="project" value="UniProtKB"/>
</dbReference>
<dbReference type="GO" id="GO:0005737">
    <property type="term" value="C:cytoplasm"/>
    <property type="evidence" value="ECO:0000314"/>
    <property type="project" value="UniProtKB"/>
</dbReference>
<dbReference type="GO" id="GO:0030057">
    <property type="term" value="C:desmosome"/>
    <property type="evidence" value="ECO:0000314"/>
    <property type="project" value="WormBase"/>
</dbReference>
<dbReference type="GO" id="GO:0005882">
    <property type="term" value="C:intermediate filament"/>
    <property type="evidence" value="ECO:0007669"/>
    <property type="project" value="UniProtKB-KW"/>
</dbReference>
<dbReference type="GO" id="GO:0005635">
    <property type="term" value="C:nuclear envelope"/>
    <property type="evidence" value="ECO:0000318"/>
    <property type="project" value="GO_Central"/>
</dbReference>
<dbReference type="GO" id="GO:0005652">
    <property type="term" value="C:nuclear lamina"/>
    <property type="evidence" value="ECO:0000318"/>
    <property type="project" value="GO_Central"/>
</dbReference>
<dbReference type="GO" id="GO:0005200">
    <property type="term" value="F:structural constituent of cytoskeleton"/>
    <property type="evidence" value="ECO:0000318"/>
    <property type="project" value="GO_Central"/>
</dbReference>
<dbReference type="GO" id="GO:0031507">
    <property type="term" value="P:heterochromatin formation"/>
    <property type="evidence" value="ECO:0000318"/>
    <property type="project" value="GO_Central"/>
</dbReference>
<dbReference type="GO" id="GO:0006998">
    <property type="term" value="P:nuclear envelope organization"/>
    <property type="evidence" value="ECO:0000318"/>
    <property type="project" value="GO_Central"/>
</dbReference>
<dbReference type="GO" id="GO:0007097">
    <property type="term" value="P:nuclear migration"/>
    <property type="evidence" value="ECO:0000318"/>
    <property type="project" value="GO_Central"/>
</dbReference>
<dbReference type="GO" id="GO:0051664">
    <property type="term" value="P:nuclear pore localization"/>
    <property type="evidence" value="ECO:0000318"/>
    <property type="project" value="GO_Central"/>
</dbReference>
<dbReference type="GO" id="GO:0048621">
    <property type="term" value="P:post-embryonic digestive tract morphogenesis"/>
    <property type="evidence" value="ECO:0000315"/>
    <property type="project" value="UniProtKB"/>
</dbReference>
<dbReference type="GO" id="GO:0090435">
    <property type="term" value="P:protein localization to nuclear envelope"/>
    <property type="evidence" value="ECO:0000318"/>
    <property type="project" value="GO_Central"/>
</dbReference>
<dbReference type="Gene3D" id="1.20.5.500">
    <property type="entry name" value="Single helix bin"/>
    <property type="match status" value="1"/>
</dbReference>
<dbReference type="InterPro" id="IPR039008">
    <property type="entry name" value="IF_rod_dom"/>
</dbReference>
<dbReference type="InterPro" id="IPR001322">
    <property type="entry name" value="Lamin_tail_dom"/>
</dbReference>
<dbReference type="InterPro" id="IPR036415">
    <property type="entry name" value="Lamin_tail_dom_sf"/>
</dbReference>
<dbReference type="PANTHER" id="PTHR45721:SF1">
    <property type="entry name" value="INTERMEDIATE FILAMENT PROTEIN IFC-2"/>
    <property type="match status" value="1"/>
</dbReference>
<dbReference type="PANTHER" id="PTHR45721">
    <property type="entry name" value="LAMIN DM0-RELATED"/>
    <property type="match status" value="1"/>
</dbReference>
<dbReference type="Pfam" id="PF00038">
    <property type="entry name" value="Filament"/>
    <property type="match status" value="1"/>
</dbReference>
<dbReference type="SMART" id="SM01391">
    <property type="entry name" value="Filament"/>
    <property type="match status" value="1"/>
</dbReference>
<dbReference type="SUPFAM" id="SSF64593">
    <property type="entry name" value="Intermediate filament protein, coiled coil region"/>
    <property type="match status" value="2"/>
</dbReference>
<dbReference type="SUPFAM" id="SSF74853">
    <property type="entry name" value="Lamin A/C globular tail domain"/>
    <property type="match status" value="1"/>
</dbReference>
<dbReference type="PROSITE" id="PS51842">
    <property type="entry name" value="IF_ROD_2"/>
    <property type="match status" value="1"/>
</dbReference>
<dbReference type="PROSITE" id="PS51841">
    <property type="entry name" value="LTD"/>
    <property type="match status" value="1"/>
</dbReference>
<protein>
    <recommendedName>
        <fullName>Intermediate filament protein ifc-2</fullName>
    </recommendedName>
    <alternativeName>
        <fullName>Cel IF C2</fullName>
    </alternativeName>
    <alternativeName>
        <fullName>Intermediate filament protein C2</fullName>
        <shortName>IF-C2</shortName>
    </alternativeName>
</protein>